<dbReference type="EMBL" id="AF303741">
    <property type="protein sequence ID" value="AAK82060.1"/>
    <property type="molecule type" value="Genomic_DNA"/>
</dbReference>
<dbReference type="RefSeq" id="NP_149661.1">
    <property type="nucleotide sequence ID" value="NC_003038.1"/>
</dbReference>
<dbReference type="KEGG" id="vg:1733146"/>
<dbReference type="OrthoDB" id="7734at10239"/>
<dbReference type="Proteomes" id="UP000001359">
    <property type="component" value="Genome"/>
</dbReference>
<organismHost>
    <name type="scientific">Acheta domesticus</name>
    <name type="common">House cricket</name>
    <dbReference type="NCBI Taxonomy" id="6997"/>
</organismHost>
<organismHost>
    <name type="scientific">Chilo suppressalis</name>
    <name type="common">Asiatic rice borer moth</name>
    <dbReference type="NCBI Taxonomy" id="168631"/>
</organismHost>
<organismHost>
    <name type="scientific">Gryllus bimaculatus</name>
    <name type="common">Two-spotted cricket</name>
    <dbReference type="NCBI Taxonomy" id="6999"/>
</organismHost>
<organismHost>
    <name type="scientific">Gryllus campestris</name>
    <dbReference type="NCBI Taxonomy" id="58607"/>
</organismHost>
<organismHost>
    <name type="scientific">Spodoptera frugiperda</name>
    <name type="common">Fall armyworm</name>
    <dbReference type="NCBI Taxonomy" id="7108"/>
</organismHost>
<comment type="similarity">
    <text evidence="1">Belongs to the IIV-6 198R family.</text>
</comment>
<name>VF198_IIV6</name>
<protein>
    <recommendedName>
        <fullName>Uncharacterized protein 198R</fullName>
    </recommendedName>
</protein>
<reference key="1">
    <citation type="journal article" date="2001" name="Virology">
        <title>Analysis of the first complete DNA sequence of an invertebrate iridovirus: coding strategy of the genome of Chilo iridescent virus.</title>
        <authorList>
            <person name="Jakob N.J."/>
            <person name="Mueller K."/>
            <person name="Bahr U."/>
            <person name="Darai G."/>
        </authorList>
    </citation>
    <scope>NUCLEOTIDE SEQUENCE [LARGE SCALE GENOMIC DNA]</scope>
</reference>
<reference key="2">
    <citation type="journal article" date="2007" name="Virol. J.">
        <title>Comparative genomic analysis of the family Iridoviridae: re-annotating and defining the core set of iridovirus genes.</title>
        <authorList>
            <person name="Eaton H.E."/>
            <person name="Metcalf J."/>
            <person name="Penny E."/>
            <person name="Tcherepanov V."/>
            <person name="Upton C."/>
            <person name="Brunetti C.R."/>
        </authorList>
    </citation>
    <scope>GENOME REANNOTATION</scope>
</reference>
<feature type="chain" id="PRO_0000378022" description="Uncharacterized protein 198R">
    <location>
        <begin position="1"/>
        <end position="472"/>
    </location>
</feature>
<gene>
    <name type="ORF">IIV6-198R</name>
</gene>
<proteinExistence type="inferred from homology"/>
<organism>
    <name type="scientific">Invertebrate iridescent virus 6</name>
    <name type="common">IIV-6</name>
    <name type="synonym">Chilo iridescent virus</name>
    <dbReference type="NCBI Taxonomy" id="176652"/>
    <lineage>
        <taxon>Viruses</taxon>
        <taxon>Varidnaviria</taxon>
        <taxon>Bamfordvirae</taxon>
        <taxon>Nucleocytoviricota</taxon>
        <taxon>Megaviricetes</taxon>
        <taxon>Pimascovirales</taxon>
        <taxon>Iridoviridae</taxon>
        <taxon>Betairidovirinae</taxon>
        <taxon>Iridovirus</taxon>
    </lineage>
</organism>
<evidence type="ECO:0000305" key="1"/>
<sequence length="472" mass="52183">MNTFPKLNTIRNELKSVLDSDVIPLELTSLNRNRSIAKNPFLFEVTLNNTGQKNNGIEAFDPVTNQLPINLGSINSLNTGQILLEWTGLDINVTGTISSINDNEIIITFTSAFNNQYNYYRGLISVFSTGTWAHIIEYVFLGNNLGLFRFENLPSTLPTIGSSVTITFNGLLTSSGSNIFSVFIPKTMEHNALSGLLLYNETLNENKMISTYSSQRAEALISSGPVPTWTNAHTYSVRKEVPFVSSVSAAPPPTSTTVSLTPIPVGTGSPGDFIRNRSTGEIVTIVTIDNTTGAVTFSPSVNPVWVAGQTLEILTFNRDNFNYVTYSSLQREAPTGEYEATLISLNLPKERLDIDFPIEKMPFVYLEVRDTFNPSTNSFMSNNPGSKKALFKATLKSNKTDDKPFVKFSGDRAIRTLKFRPSAANFIFSILGPNGNPLMLWRQDTSSPYPPNRLLQTEAFLNIRKVSNSKYA</sequence>
<keyword id="KW-1185">Reference proteome</keyword>
<accession>Q91FX2</accession>